<keyword id="KW-0131">Cell cycle</keyword>
<keyword id="KW-0132">Cell division</keyword>
<keyword id="KW-0133">Cell shape</keyword>
<keyword id="KW-0961">Cell wall biogenesis/degradation</keyword>
<keyword id="KW-0963">Cytoplasm</keyword>
<keyword id="KW-0573">Peptidoglycan synthesis</keyword>
<keyword id="KW-0670">Pyruvate</keyword>
<keyword id="KW-0808">Transferase</keyword>
<organism>
    <name type="scientific">Shewanella baltica (strain OS195)</name>
    <dbReference type="NCBI Taxonomy" id="399599"/>
    <lineage>
        <taxon>Bacteria</taxon>
        <taxon>Pseudomonadati</taxon>
        <taxon>Pseudomonadota</taxon>
        <taxon>Gammaproteobacteria</taxon>
        <taxon>Alteromonadales</taxon>
        <taxon>Shewanellaceae</taxon>
        <taxon>Shewanella</taxon>
    </lineage>
</organism>
<comment type="function">
    <text evidence="1">Cell wall formation. Adds enolpyruvyl to UDP-N-acetylglucosamine.</text>
</comment>
<comment type="catalytic activity">
    <reaction evidence="1">
        <text>phosphoenolpyruvate + UDP-N-acetyl-alpha-D-glucosamine = UDP-N-acetyl-3-O-(1-carboxyvinyl)-alpha-D-glucosamine + phosphate</text>
        <dbReference type="Rhea" id="RHEA:18681"/>
        <dbReference type="ChEBI" id="CHEBI:43474"/>
        <dbReference type="ChEBI" id="CHEBI:57705"/>
        <dbReference type="ChEBI" id="CHEBI:58702"/>
        <dbReference type="ChEBI" id="CHEBI:68483"/>
        <dbReference type="EC" id="2.5.1.7"/>
    </reaction>
</comment>
<comment type="pathway">
    <text evidence="1">Cell wall biogenesis; peptidoglycan biosynthesis.</text>
</comment>
<comment type="subcellular location">
    <subcellularLocation>
        <location evidence="1">Cytoplasm</location>
    </subcellularLocation>
</comment>
<comment type="similarity">
    <text evidence="1">Belongs to the EPSP synthase family. MurA subfamily.</text>
</comment>
<accession>A9L107</accession>
<protein>
    <recommendedName>
        <fullName evidence="1">UDP-N-acetylglucosamine 1-carboxyvinyltransferase</fullName>
        <ecNumber evidence="1">2.5.1.7</ecNumber>
    </recommendedName>
    <alternativeName>
        <fullName evidence="1">Enoylpyruvate transferase</fullName>
    </alternativeName>
    <alternativeName>
        <fullName evidence="1">UDP-N-acetylglucosamine enolpyruvyl transferase</fullName>
        <shortName evidence="1">EPT</shortName>
    </alternativeName>
</protein>
<dbReference type="EC" id="2.5.1.7" evidence="1"/>
<dbReference type="EMBL" id="CP000891">
    <property type="protein sequence ID" value="ABX47906.1"/>
    <property type="molecule type" value="Genomic_DNA"/>
</dbReference>
<dbReference type="RefSeq" id="WP_006083057.1">
    <property type="nucleotide sequence ID" value="NC_009997.1"/>
</dbReference>
<dbReference type="SMR" id="A9L107"/>
<dbReference type="GeneID" id="11774577"/>
<dbReference type="KEGG" id="sbn:Sbal195_0728"/>
<dbReference type="HOGENOM" id="CLU_027387_0_0_6"/>
<dbReference type="UniPathway" id="UPA00219"/>
<dbReference type="Proteomes" id="UP000000770">
    <property type="component" value="Chromosome"/>
</dbReference>
<dbReference type="GO" id="GO:0005737">
    <property type="term" value="C:cytoplasm"/>
    <property type="evidence" value="ECO:0007669"/>
    <property type="project" value="UniProtKB-SubCell"/>
</dbReference>
<dbReference type="GO" id="GO:0008760">
    <property type="term" value="F:UDP-N-acetylglucosamine 1-carboxyvinyltransferase activity"/>
    <property type="evidence" value="ECO:0007669"/>
    <property type="project" value="UniProtKB-UniRule"/>
</dbReference>
<dbReference type="GO" id="GO:0051301">
    <property type="term" value="P:cell division"/>
    <property type="evidence" value="ECO:0007669"/>
    <property type="project" value="UniProtKB-KW"/>
</dbReference>
<dbReference type="GO" id="GO:0071555">
    <property type="term" value="P:cell wall organization"/>
    <property type="evidence" value="ECO:0007669"/>
    <property type="project" value="UniProtKB-KW"/>
</dbReference>
<dbReference type="GO" id="GO:0009252">
    <property type="term" value="P:peptidoglycan biosynthetic process"/>
    <property type="evidence" value="ECO:0007669"/>
    <property type="project" value="UniProtKB-UniRule"/>
</dbReference>
<dbReference type="GO" id="GO:0008360">
    <property type="term" value="P:regulation of cell shape"/>
    <property type="evidence" value="ECO:0007669"/>
    <property type="project" value="UniProtKB-KW"/>
</dbReference>
<dbReference type="GO" id="GO:0019277">
    <property type="term" value="P:UDP-N-acetylgalactosamine biosynthetic process"/>
    <property type="evidence" value="ECO:0007669"/>
    <property type="project" value="InterPro"/>
</dbReference>
<dbReference type="CDD" id="cd01555">
    <property type="entry name" value="UdpNAET"/>
    <property type="match status" value="1"/>
</dbReference>
<dbReference type="FunFam" id="3.65.10.10:FF:000002">
    <property type="entry name" value="UDP-N-acetylglucosamine 1-carboxyvinyltransferase"/>
    <property type="match status" value="1"/>
</dbReference>
<dbReference type="Gene3D" id="3.65.10.10">
    <property type="entry name" value="Enolpyruvate transferase domain"/>
    <property type="match status" value="2"/>
</dbReference>
<dbReference type="HAMAP" id="MF_00111">
    <property type="entry name" value="MurA"/>
    <property type="match status" value="1"/>
</dbReference>
<dbReference type="InterPro" id="IPR001986">
    <property type="entry name" value="Enolpyruvate_Tfrase_dom"/>
</dbReference>
<dbReference type="InterPro" id="IPR036968">
    <property type="entry name" value="Enolpyruvate_Tfrase_sf"/>
</dbReference>
<dbReference type="InterPro" id="IPR050068">
    <property type="entry name" value="MurA_subfamily"/>
</dbReference>
<dbReference type="InterPro" id="IPR013792">
    <property type="entry name" value="RNA3'P_cycl/enolpyr_Trfase_a/b"/>
</dbReference>
<dbReference type="InterPro" id="IPR005750">
    <property type="entry name" value="UDP_GlcNAc_COvinyl_MurA"/>
</dbReference>
<dbReference type="NCBIfam" id="TIGR01072">
    <property type="entry name" value="murA"/>
    <property type="match status" value="1"/>
</dbReference>
<dbReference type="NCBIfam" id="NF006873">
    <property type="entry name" value="PRK09369.1"/>
    <property type="match status" value="1"/>
</dbReference>
<dbReference type="PANTHER" id="PTHR43783">
    <property type="entry name" value="UDP-N-ACETYLGLUCOSAMINE 1-CARBOXYVINYLTRANSFERASE"/>
    <property type="match status" value="1"/>
</dbReference>
<dbReference type="PANTHER" id="PTHR43783:SF1">
    <property type="entry name" value="UDP-N-ACETYLGLUCOSAMINE 1-CARBOXYVINYLTRANSFERASE"/>
    <property type="match status" value="1"/>
</dbReference>
<dbReference type="Pfam" id="PF00275">
    <property type="entry name" value="EPSP_synthase"/>
    <property type="match status" value="1"/>
</dbReference>
<dbReference type="SUPFAM" id="SSF55205">
    <property type="entry name" value="EPT/RTPC-like"/>
    <property type="match status" value="1"/>
</dbReference>
<evidence type="ECO:0000255" key="1">
    <source>
        <dbReference type="HAMAP-Rule" id="MF_00111"/>
    </source>
</evidence>
<feature type="chain" id="PRO_1000075982" description="UDP-N-acetylglucosamine 1-carboxyvinyltransferase">
    <location>
        <begin position="1"/>
        <end position="419"/>
    </location>
</feature>
<feature type="active site" description="Proton donor" evidence="1">
    <location>
        <position position="117"/>
    </location>
</feature>
<feature type="binding site" evidence="1">
    <location>
        <begin position="22"/>
        <end position="23"/>
    </location>
    <ligand>
        <name>phosphoenolpyruvate</name>
        <dbReference type="ChEBI" id="CHEBI:58702"/>
    </ligand>
</feature>
<feature type="binding site" evidence="1">
    <location>
        <position position="93"/>
    </location>
    <ligand>
        <name>UDP-N-acetyl-alpha-D-glucosamine</name>
        <dbReference type="ChEBI" id="CHEBI:57705"/>
    </ligand>
</feature>
<feature type="binding site" evidence="1">
    <location>
        <position position="307"/>
    </location>
    <ligand>
        <name>UDP-N-acetyl-alpha-D-glucosamine</name>
        <dbReference type="ChEBI" id="CHEBI:57705"/>
    </ligand>
</feature>
<feature type="binding site" evidence="1">
    <location>
        <position position="329"/>
    </location>
    <ligand>
        <name>UDP-N-acetyl-alpha-D-glucosamine</name>
        <dbReference type="ChEBI" id="CHEBI:57705"/>
    </ligand>
</feature>
<feature type="modified residue" description="2-(S-cysteinyl)pyruvic acid O-phosphothioketal" evidence="1">
    <location>
        <position position="117"/>
    </location>
</feature>
<sequence length="419" mass="44674">MDKLTIQASPPLAGDVIISGAKNAALPILMAGVLAETDFVVSNVPNLRDVTTSCKLLRCLGAEVTELGDGQIRISTTNLNEFCAPYDLVKTMRASILILGPLLARYGTADVSLPGGCAIGARPVNLHLHGLEMMGAKIEVKEGYIKARVDGRLKGAHIFMDMVSVGATENLLMAAALADGETVIENAAREPEVIDLANCLIAMGAKITGVGSATLRIQGVERLQGCNYRVMPDRIETGSFLVAAAVTRGRIRCLKADPASLESVIAKLEDAGAKITTGEDWIELDMQGKRPKAVNIKTAPYPGFPTDMQAQFCVLNALAQGTATITETIFENRFMHVPELIRMGATMELEGNTCIIQGIESLSGAQVMATDLRASASLVIAGLVADGKTIVDRIYHLDRGYEHIENKFQGLGAQVVRTQ</sequence>
<proteinExistence type="inferred from homology"/>
<reference key="1">
    <citation type="submission" date="2007-11" db="EMBL/GenBank/DDBJ databases">
        <title>Complete sequence of chromosome of Shewanella baltica OS195.</title>
        <authorList>
            <consortium name="US DOE Joint Genome Institute"/>
            <person name="Copeland A."/>
            <person name="Lucas S."/>
            <person name="Lapidus A."/>
            <person name="Barry K."/>
            <person name="Glavina del Rio T."/>
            <person name="Dalin E."/>
            <person name="Tice H."/>
            <person name="Pitluck S."/>
            <person name="Chain P."/>
            <person name="Malfatti S."/>
            <person name="Shin M."/>
            <person name="Vergez L."/>
            <person name="Schmutz J."/>
            <person name="Larimer F."/>
            <person name="Land M."/>
            <person name="Hauser L."/>
            <person name="Kyrpides N."/>
            <person name="Kim E."/>
            <person name="Brettar I."/>
            <person name="Rodrigues J."/>
            <person name="Konstantinidis K."/>
            <person name="Klappenbach J."/>
            <person name="Hofle M."/>
            <person name="Tiedje J."/>
            <person name="Richardson P."/>
        </authorList>
    </citation>
    <scope>NUCLEOTIDE SEQUENCE [LARGE SCALE GENOMIC DNA]</scope>
    <source>
        <strain>OS195</strain>
    </source>
</reference>
<gene>
    <name evidence="1" type="primary">murA</name>
    <name type="ordered locus">Sbal195_0728</name>
</gene>
<name>MURA_SHEB9</name>